<reference key="1">
    <citation type="journal article" date="1994" name="Nature">
        <title>A yeast gene necessary for bud-site selection encodes a protein similar to insulin-degrading enzymes.</title>
        <authorList>
            <person name="Fujita A."/>
            <person name="Oka C."/>
            <person name="Arikawa Y."/>
            <person name="Katagai T."/>
            <person name="Tonouchi A."/>
            <person name="Kuhara S."/>
            <person name="Misumi Y."/>
        </authorList>
    </citation>
    <scope>NUCLEOTIDE SEQUENCE [GENOMIC DNA]</scope>
    <source>
        <strain>ATCC 44774 / DBY747</strain>
    </source>
</reference>
<reference key="2">
    <citation type="journal article" date="1997" name="Nature">
        <title>The nucleotide sequence of Saccharomyces cerevisiae chromosome XVI.</title>
        <authorList>
            <person name="Bussey H."/>
            <person name="Storms R.K."/>
            <person name="Ahmed A."/>
            <person name="Albermann K."/>
            <person name="Allen E."/>
            <person name="Ansorge W."/>
            <person name="Araujo R."/>
            <person name="Aparicio A."/>
            <person name="Barrell B.G."/>
            <person name="Badcock K."/>
            <person name="Benes V."/>
            <person name="Botstein D."/>
            <person name="Bowman S."/>
            <person name="Brueckner M."/>
            <person name="Carpenter J."/>
            <person name="Cherry J.M."/>
            <person name="Chung E."/>
            <person name="Churcher C.M."/>
            <person name="Coster F."/>
            <person name="Davis K."/>
            <person name="Davis R.W."/>
            <person name="Dietrich F.S."/>
            <person name="Delius H."/>
            <person name="DiPaolo T."/>
            <person name="Dubois E."/>
            <person name="Duesterhoeft A."/>
            <person name="Duncan M."/>
            <person name="Floeth M."/>
            <person name="Fortin N."/>
            <person name="Friesen J.D."/>
            <person name="Fritz C."/>
            <person name="Goffeau A."/>
            <person name="Hall J."/>
            <person name="Hebling U."/>
            <person name="Heumann K."/>
            <person name="Hilbert H."/>
            <person name="Hillier L.W."/>
            <person name="Hunicke-Smith S."/>
            <person name="Hyman R.W."/>
            <person name="Johnston M."/>
            <person name="Kalman S."/>
            <person name="Kleine K."/>
            <person name="Komp C."/>
            <person name="Kurdi O."/>
            <person name="Lashkari D."/>
            <person name="Lew H."/>
            <person name="Lin A."/>
            <person name="Lin D."/>
            <person name="Louis E.J."/>
            <person name="Marathe R."/>
            <person name="Messenguy F."/>
            <person name="Mewes H.-W."/>
            <person name="Mirtipati S."/>
            <person name="Moestl D."/>
            <person name="Mueller-Auer S."/>
            <person name="Namath A."/>
            <person name="Nentwich U."/>
            <person name="Oefner P."/>
            <person name="Pearson D."/>
            <person name="Petel F.X."/>
            <person name="Pohl T.M."/>
            <person name="Purnelle B."/>
            <person name="Rajandream M.A."/>
            <person name="Rechmann S."/>
            <person name="Rieger M."/>
            <person name="Riles L."/>
            <person name="Roberts D."/>
            <person name="Schaefer M."/>
            <person name="Scharfe M."/>
            <person name="Scherens B."/>
            <person name="Schramm S."/>
            <person name="Schroeder M."/>
            <person name="Sdicu A.-M."/>
            <person name="Tettelin H."/>
            <person name="Urrestarazu L.A."/>
            <person name="Ushinsky S."/>
            <person name="Vierendeels F."/>
            <person name="Vissers S."/>
            <person name="Voss H."/>
            <person name="Walsh S.V."/>
            <person name="Wambutt R."/>
            <person name="Wang Y."/>
            <person name="Wedler E."/>
            <person name="Wedler H."/>
            <person name="Winnett E."/>
            <person name="Zhong W.-W."/>
            <person name="Zollner A."/>
            <person name="Vo D.H."/>
            <person name="Hani J."/>
        </authorList>
    </citation>
    <scope>NUCLEOTIDE SEQUENCE [LARGE SCALE GENOMIC DNA]</scope>
    <source>
        <strain>ATCC 204508 / S288c</strain>
    </source>
</reference>
<reference key="3">
    <citation type="journal article" date="2014" name="G3 (Bethesda)">
        <title>The reference genome sequence of Saccharomyces cerevisiae: Then and now.</title>
        <authorList>
            <person name="Engel S.R."/>
            <person name="Dietrich F.S."/>
            <person name="Fisk D.G."/>
            <person name="Binkley G."/>
            <person name="Balakrishnan R."/>
            <person name="Costanzo M.C."/>
            <person name="Dwight S.S."/>
            <person name="Hitz B.C."/>
            <person name="Karra K."/>
            <person name="Nash R.S."/>
            <person name="Weng S."/>
            <person name="Wong E.D."/>
            <person name="Lloyd P."/>
            <person name="Skrzypek M.S."/>
            <person name="Miyasato S.R."/>
            <person name="Simison M."/>
            <person name="Cherry J.M."/>
        </authorList>
    </citation>
    <scope>GENOME REANNOTATION</scope>
    <source>
        <strain>ATCC 204508 / S288c</strain>
    </source>
</reference>
<reference key="4">
    <citation type="journal article" date="2002" name="Curr. Biol.">
        <title>Subcellular localization of Axl1, the cell type-specific regulator of polarity.</title>
        <authorList>
            <person name="Lord M."/>
            <person name="Inose F."/>
            <person name="Hiroko T."/>
            <person name="Hata T."/>
            <person name="Fujita A."/>
            <person name="Chant J."/>
        </authorList>
    </citation>
    <scope>INTERACTION WITH BUD5</scope>
    <scope>SUBCELLULAR LOCATION</scope>
</reference>
<reference key="5">
    <citation type="journal article" date="2003" name="Nature">
        <title>Global analysis of protein expression in yeast.</title>
        <authorList>
            <person name="Ghaemmaghami S."/>
            <person name="Huh W.-K."/>
            <person name="Bower K."/>
            <person name="Howson R.W."/>
            <person name="Belle A."/>
            <person name="Dephoure N."/>
            <person name="O'Shea E.K."/>
            <person name="Weissman J.S."/>
        </authorList>
    </citation>
    <scope>LEVEL OF PROTEIN EXPRESSION [LARGE SCALE ANALYSIS]</scope>
</reference>
<reference key="6">
    <citation type="journal article" date="2007" name="Proc. Natl. Acad. Sci. U.S.A.">
        <title>Analysis of phosphorylation sites on proteins from Saccharomyces cerevisiae by electron transfer dissociation (ETD) mass spectrometry.</title>
        <authorList>
            <person name="Chi A."/>
            <person name="Huttenhower C."/>
            <person name="Geer L.Y."/>
            <person name="Coon J.J."/>
            <person name="Syka J.E.P."/>
            <person name="Bai D.L."/>
            <person name="Shabanowitz J."/>
            <person name="Burke D.J."/>
            <person name="Troyanskaya O.G."/>
            <person name="Hunt D.F."/>
        </authorList>
    </citation>
    <scope>PHOSPHORYLATION [LARGE SCALE ANALYSIS] AT SER-262</scope>
    <scope>IDENTIFICATION BY MASS SPECTROMETRY [LARGE SCALE ANALYSIS]</scope>
</reference>
<gene>
    <name type="primary">AXL1</name>
    <name type="ordered locus">YPR122W</name>
    <name type="ORF">P9642.4</name>
</gene>
<organism>
    <name type="scientific">Saccharomyces cerevisiae (strain ATCC 204508 / S288c)</name>
    <name type="common">Baker's yeast</name>
    <dbReference type="NCBI Taxonomy" id="559292"/>
    <lineage>
        <taxon>Eukaryota</taxon>
        <taxon>Fungi</taxon>
        <taxon>Dikarya</taxon>
        <taxon>Ascomycota</taxon>
        <taxon>Saccharomycotina</taxon>
        <taxon>Saccharomycetes</taxon>
        <taxon>Saccharomycetales</taxon>
        <taxon>Saccharomycetaceae</taxon>
        <taxon>Saccharomyces</taxon>
    </lineage>
</organism>
<evidence type="ECO:0000250" key="1"/>
<evidence type="ECO:0000255" key="2">
    <source>
        <dbReference type="PROSITE-ProRule" id="PRU10096"/>
    </source>
</evidence>
<evidence type="ECO:0000269" key="3">
    <source>
    </source>
</evidence>
<evidence type="ECO:0000269" key="4">
    <source>
    </source>
</evidence>
<evidence type="ECO:0000305" key="5"/>
<evidence type="ECO:0007744" key="6">
    <source>
    </source>
</evidence>
<feature type="chain" id="PRO_0000074417" description="Putative protease AXL1">
    <location>
        <begin position="1"/>
        <end position="1208"/>
    </location>
</feature>
<feature type="active site" description="Proton acceptor" evidence="2">
    <location>
        <position position="71"/>
    </location>
</feature>
<feature type="binding site" evidence="2">
    <location>
        <position position="68"/>
    </location>
    <ligand>
        <name>Zn(2+)</name>
        <dbReference type="ChEBI" id="CHEBI:29105"/>
    </ligand>
</feature>
<feature type="binding site" evidence="2">
    <location>
        <position position="72"/>
    </location>
    <ligand>
        <name>Zn(2+)</name>
        <dbReference type="ChEBI" id="CHEBI:29105"/>
    </ligand>
</feature>
<feature type="binding site" evidence="2">
    <location>
        <position position="156"/>
    </location>
    <ligand>
        <name>Zn(2+)</name>
        <dbReference type="ChEBI" id="CHEBI:29105"/>
    </ligand>
</feature>
<feature type="modified residue" description="Phosphoserine" evidence="6">
    <location>
        <position position="262"/>
    </location>
</feature>
<feature type="sequence conflict" description="In Ref. 1; BAA04613." evidence="5" ref="1">
    <original>E</original>
    <variation>G</variation>
    <location>
        <position position="113"/>
    </location>
</feature>
<dbReference type="EC" id="3.4.24.-"/>
<dbReference type="EMBL" id="D17787">
    <property type="protein sequence ID" value="BAA04613.1"/>
    <property type="molecule type" value="Genomic_DNA"/>
</dbReference>
<dbReference type="EMBL" id="U40828">
    <property type="protein sequence ID" value="AAB68063.1"/>
    <property type="molecule type" value="Genomic_DNA"/>
</dbReference>
<dbReference type="EMBL" id="BK006949">
    <property type="protein sequence ID" value="DAA11537.1"/>
    <property type="molecule type" value="Genomic_DNA"/>
</dbReference>
<dbReference type="PIR" id="S69015">
    <property type="entry name" value="S69015"/>
</dbReference>
<dbReference type="RefSeq" id="NP_015447.1">
    <property type="nucleotide sequence ID" value="NM_001184219.1"/>
</dbReference>
<dbReference type="SMR" id="P40851"/>
<dbReference type="BioGRID" id="36291">
    <property type="interactions" value="201"/>
</dbReference>
<dbReference type="DIP" id="DIP-4872N"/>
<dbReference type="FunCoup" id="P40851">
    <property type="interactions" value="73"/>
</dbReference>
<dbReference type="IntAct" id="P40851">
    <property type="interactions" value="5"/>
</dbReference>
<dbReference type="STRING" id="4932.YPR122W"/>
<dbReference type="MEROPS" id="M16.007"/>
<dbReference type="iPTMnet" id="P40851"/>
<dbReference type="PaxDb" id="4932-YPR122W"/>
<dbReference type="PeptideAtlas" id="P40851"/>
<dbReference type="EnsemblFungi" id="YPR122W_mRNA">
    <property type="protein sequence ID" value="YPR122W"/>
    <property type="gene ID" value="YPR122W"/>
</dbReference>
<dbReference type="GeneID" id="856240"/>
<dbReference type="KEGG" id="sce:YPR122W"/>
<dbReference type="AGR" id="SGD:S000006326"/>
<dbReference type="SGD" id="S000006326">
    <property type="gene designation" value="AXL1"/>
</dbReference>
<dbReference type="VEuPathDB" id="FungiDB:YPR122W"/>
<dbReference type="eggNOG" id="KOG0959">
    <property type="taxonomic scope" value="Eukaryota"/>
</dbReference>
<dbReference type="GeneTree" id="ENSGT00940000175681"/>
<dbReference type="HOGENOM" id="CLU_008088_0_0_1"/>
<dbReference type="InParanoid" id="P40851"/>
<dbReference type="OMA" id="HLCEHMI"/>
<dbReference type="OrthoDB" id="952271at2759"/>
<dbReference type="BioCyc" id="YEAST:G3O-34261-MONOMER"/>
<dbReference type="BioGRID-ORCS" id="856240">
    <property type="hits" value="1 hit in 10 CRISPR screens"/>
</dbReference>
<dbReference type="PRO" id="PR:P40851"/>
<dbReference type="Proteomes" id="UP000002311">
    <property type="component" value="Chromosome XVI"/>
</dbReference>
<dbReference type="RNAct" id="P40851">
    <property type="molecule type" value="protein"/>
</dbReference>
<dbReference type="GO" id="GO:0005935">
    <property type="term" value="C:cellular bud neck"/>
    <property type="evidence" value="ECO:0000314"/>
    <property type="project" value="SGD"/>
</dbReference>
<dbReference type="GO" id="GO:0043332">
    <property type="term" value="C:mating projection tip"/>
    <property type="evidence" value="ECO:0000314"/>
    <property type="project" value="SGD"/>
</dbReference>
<dbReference type="GO" id="GO:0005759">
    <property type="term" value="C:mitochondrial matrix"/>
    <property type="evidence" value="ECO:0000318"/>
    <property type="project" value="GO_Central"/>
</dbReference>
<dbReference type="GO" id="GO:0046872">
    <property type="term" value="F:metal ion binding"/>
    <property type="evidence" value="ECO:0007669"/>
    <property type="project" value="UniProtKB-KW"/>
</dbReference>
<dbReference type="GO" id="GO:0004222">
    <property type="term" value="F:metalloendopeptidase activity"/>
    <property type="evidence" value="ECO:0000315"/>
    <property type="project" value="SGD"/>
</dbReference>
<dbReference type="GO" id="GO:0007120">
    <property type="term" value="P:axial cellular bud site selection"/>
    <property type="evidence" value="ECO:0000315"/>
    <property type="project" value="SGD"/>
</dbReference>
<dbReference type="GO" id="GO:0000755">
    <property type="term" value="P:cytogamy"/>
    <property type="evidence" value="ECO:0000315"/>
    <property type="project" value="SGD"/>
</dbReference>
<dbReference type="GO" id="GO:0071432">
    <property type="term" value="P:peptide mating pheromone maturation involved in positive regulation of conjugation with cellular fusion"/>
    <property type="evidence" value="ECO:0000315"/>
    <property type="project" value="SGD"/>
</dbReference>
<dbReference type="GO" id="GO:0016485">
    <property type="term" value="P:protein processing"/>
    <property type="evidence" value="ECO:0000318"/>
    <property type="project" value="GO_Central"/>
</dbReference>
<dbReference type="FunFam" id="3.30.830.10:FF:000082">
    <property type="entry name" value="Axl1p"/>
    <property type="match status" value="1"/>
</dbReference>
<dbReference type="FunFam" id="3.30.830.10:FF:000012">
    <property type="entry name" value="Protease 3"/>
    <property type="match status" value="1"/>
</dbReference>
<dbReference type="Gene3D" id="3.30.830.10">
    <property type="entry name" value="Metalloenzyme, LuxS/M16 peptidase-like"/>
    <property type="match status" value="4"/>
</dbReference>
<dbReference type="InterPro" id="IPR011249">
    <property type="entry name" value="Metalloenz_LuxS/M16"/>
</dbReference>
<dbReference type="InterPro" id="IPR011765">
    <property type="entry name" value="Pept_M16_N"/>
</dbReference>
<dbReference type="InterPro" id="IPR001431">
    <property type="entry name" value="Pept_M16_Zn_BS"/>
</dbReference>
<dbReference type="InterPro" id="IPR050626">
    <property type="entry name" value="Peptidase_M16"/>
</dbReference>
<dbReference type="PANTHER" id="PTHR43690:SF18">
    <property type="entry name" value="INSULIN-DEGRADING ENZYME-RELATED"/>
    <property type="match status" value="1"/>
</dbReference>
<dbReference type="PANTHER" id="PTHR43690">
    <property type="entry name" value="NARDILYSIN"/>
    <property type="match status" value="1"/>
</dbReference>
<dbReference type="Pfam" id="PF00675">
    <property type="entry name" value="Peptidase_M16"/>
    <property type="match status" value="1"/>
</dbReference>
<dbReference type="SUPFAM" id="SSF63411">
    <property type="entry name" value="LuxS/MPP-like metallohydrolase"/>
    <property type="match status" value="4"/>
</dbReference>
<dbReference type="PROSITE" id="PS00143">
    <property type="entry name" value="INSULINASE"/>
    <property type="match status" value="1"/>
</dbReference>
<proteinExistence type="evidence at protein level"/>
<keyword id="KW-0378">Hydrolase</keyword>
<keyword id="KW-0479">Metal-binding</keyword>
<keyword id="KW-0482">Metalloprotease</keyword>
<keyword id="KW-0597">Phosphoprotein</keyword>
<keyword id="KW-0645">Protease</keyword>
<keyword id="KW-1185">Reference proteome</keyword>
<keyword id="KW-0862">Zinc</keyword>
<protein>
    <recommendedName>
        <fullName>Putative protease AXL1</fullName>
        <ecNumber>3.4.24.-</ecNumber>
    </recommendedName>
</protein>
<sequence>MSLREVTNYEVSFYIPLSYSNRTHKVCKLPNGILALIISDPTDTSSSCSLTVCTGSHNDPKDIAGLAHLCEHMILSAGSKKYPDPGLFHTLIAKNNGSQNAFTTGEQTTFYFELPNTQNNGEFTFESILDVFASFFKEPLFNPLLISKEIYAIQSEHEGNISSTTKIFYHAARILANPDHPFSRFSTGNIHSLSSIPQLKKIKLKSSLNTYFENNFFGENITLCIRGPQSVNILTKLALSKFGDIKPKSAVKERSISIRTRSFRRSKSLKKRQDSSKNDYSDLKTFKILNTTWEKKYKNTMCFQQFPECNSIFINSNKVPIMRLLFPVSDKNTRFTKDDIKIYSHLWCELFGDESPGSLSYYLASKGWLTGCFAFTSEFAIGDIGLILELELTNSGWENIKRITTIVLNRLLPSFYVMNIDYLITFLKEQNLIDLVSFLYQSSEDLPMEECSKLSGILQDDLECLTPPNIFKGFKSLIEIDDPNIEKYENTKANIQWWTGQAIKFQNFLKSFMNHDNMRLLLLGNIKSGNIFDKMKNKSDICTDFFYEFEYYTANVHLASDNKFHSNSSYEFNFPTGNLFLPDCVSDPLKLQQLFLECSLKSKFATLRPQIYSEPTRTKPQLVSENQNYEMWILKEDPNFASDNKSVVSFEVLGLGIKPSPEATIHLEVLAQALFIITSSFLYPALRIGYTYEIASSSKGNVTLRFTISGFPEGVFTIVKTFVDTLKLIATDPTFLSKDTLRKARILVRNKYKNASSDNCVKLASVGLLIVLEKYIWTLEDRINALELTELESFEKFCFLFWRNPKHLVLFMQGSLEYADAINRYLNNNFTQHLKISNEGSKPTIRLYPPPSTKDLDQGTNAFISYNGHQDDPNNSIVYFIQTAQRDDIKNLTLTFLTEYLFSLTLVPDLRNKKQIGYIVLGGLRVLTDTVGIHITVMSGSSGHNLETRINEYLSYLQLQVLNRFTEFDFRRILLEPFLNLLKQNSTKQFEGSAGPVDLLNEIVANVQNGDNYTLNNKQMRQHRKVRNKIAEGRLNFQEDHEMIDISFLQKLTLKKYLAFFESKISIYSAQRSKLSIMITSPMAEKEIASRKMFLQLEAFLKINGFAIKNEDLKKIVEHSKGNPILLVKNLFTYFRRRNEVFKLGTVVLQEILKIIGMNLKQRYGSILGFSSQDGEGQEIEKFWNNDTSPIVPLQELPEPNFFRKAAF</sequence>
<comment type="function">
    <text>Probable protease. Involved in axial budding.</text>
</comment>
<comment type="cofactor">
    <cofactor evidence="1">
        <name>Zn(2+)</name>
        <dbReference type="ChEBI" id="CHEBI:29105"/>
    </cofactor>
    <text evidence="1">Binds 1 zinc ion per subunit.</text>
</comment>
<comment type="subunit">
    <text evidence="3">Interacts with BUD5.</text>
</comment>
<comment type="subcellular location">
    <subcellularLocation>
        <location evidence="3">Bud neck</location>
    </subcellularLocation>
    <text>Mother-bud neck and division site remnants of haploid cells.</text>
</comment>
<comment type="miscellaneous">
    <text evidence="4">Present with 623 molecules/cell in log phase SD medium.</text>
</comment>
<comment type="similarity">
    <text evidence="5">Belongs to the peptidase M16 family.</text>
</comment>
<accession>P40851</accession>
<accession>D6W4C1</accession>
<name>AXL1_YEAST</name>